<sequence length="234" mass="26179">MEFSPPLQRATLIQRYKRFLADVITPDGRELTLHCPNTGAMTGCATPGDTVWYSTSDNTKRKYPHTWELTQSQSGAIICVNTLWANRLTKEAILNESISELAGYSSLKSEVKYGAERSRIDFMLQADSRPDCYIEVKSVTLAENEQGYFPDAVTERGQKHLRELMSVAAEGQRAVIFFAVLHSAITRFSPARHIDEKYAQLLSEAQQRGVEILAYKAELSAEGMALKKSLPVTL</sequence>
<name>SFSA_ECOUT</name>
<proteinExistence type="inferred from homology"/>
<accession>Q1RG44</accession>
<gene>
    <name evidence="1" type="primary">sfsA</name>
    <name type="ordered locus">UTI89_C0160</name>
</gene>
<organism>
    <name type="scientific">Escherichia coli (strain UTI89 / UPEC)</name>
    <dbReference type="NCBI Taxonomy" id="364106"/>
    <lineage>
        <taxon>Bacteria</taxon>
        <taxon>Pseudomonadati</taxon>
        <taxon>Pseudomonadota</taxon>
        <taxon>Gammaproteobacteria</taxon>
        <taxon>Enterobacterales</taxon>
        <taxon>Enterobacteriaceae</taxon>
        <taxon>Escherichia</taxon>
    </lineage>
</organism>
<feature type="chain" id="PRO_1000007982" description="Sugar fermentation stimulation protein A">
    <location>
        <begin position="1"/>
        <end position="234"/>
    </location>
</feature>
<feature type="DNA-binding region" description="H-T-H motif" evidence="1">
    <location>
        <begin position="201"/>
        <end position="220"/>
    </location>
</feature>
<reference key="1">
    <citation type="journal article" date="2006" name="Proc. Natl. Acad. Sci. U.S.A.">
        <title>Identification of genes subject to positive selection in uropathogenic strains of Escherichia coli: a comparative genomics approach.</title>
        <authorList>
            <person name="Chen S.L."/>
            <person name="Hung C.-S."/>
            <person name="Xu J."/>
            <person name="Reigstad C.S."/>
            <person name="Magrini V."/>
            <person name="Sabo A."/>
            <person name="Blasiar D."/>
            <person name="Bieri T."/>
            <person name="Meyer R.R."/>
            <person name="Ozersky P."/>
            <person name="Armstrong J.R."/>
            <person name="Fulton R.S."/>
            <person name="Latreille J.P."/>
            <person name="Spieth J."/>
            <person name="Hooton T.M."/>
            <person name="Mardis E.R."/>
            <person name="Hultgren S.J."/>
            <person name="Gordon J.I."/>
        </authorList>
    </citation>
    <scope>NUCLEOTIDE SEQUENCE [LARGE SCALE GENOMIC DNA]</scope>
    <source>
        <strain>UTI89 / UPEC</strain>
    </source>
</reference>
<evidence type="ECO:0000255" key="1">
    <source>
        <dbReference type="HAMAP-Rule" id="MF_00095"/>
    </source>
</evidence>
<protein>
    <recommendedName>
        <fullName evidence="1">Sugar fermentation stimulation protein A</fullName>
    </recommendedName>
</protein>
<dbReference type="EMBL" id="CP000243">
    <property type="protein sequence ID" value="ABE05670.1"/>
    <property type="molecule type" value="Genomic_DNA"/>
</dbReference>
<dbReference type="RefSeq" id="WP_000396047.1">
    <property type="nucleotide sequence ID" value="NZ_CP064825.1"/>
</dbReference>
<dbReference type="SMR" id="Q1RG44"/>
<dbReference type="KEGG" id="eci:UTI89_C0160"/>
<dbReference type="HOGENOM" id="CLU_052299_2_0_6"/>
<dbReference type="Proteomes" id="UP000001952">
    <property type="component" value="Chromosome"/>
</dbReference>
<dbReference type="GO" id="GO:0003677">
    <property type="term" value="F:DNA binding"/>
    <property type="evidence" value="ECO:0007669"/>
    <property type="project" value="UniProtKB-KW"/>
</dbReference>
<dbReference type="CDD" id="cd22359">
    <property type="entry name" value="SfsA-like_bacterial"/>
    <property type="match status" value="1"/>
</dbReference>
<dbReference type="FunFam" id="2.40.50.580:FF:000001">
    <property type="entry name" value="Sugar fermentation stimulation protein A"/>
    <property type="match status" value="1"/>
</dbReference>
<dbReference type="FunFam" id="3.40.1350.60:FF:000001">
    <property type="entry name" value="Sugar fermentation stimulation protein A"/>
    <property type="match status" value="1"/>
</dbReference>
<dbReference type="Gene3D" id="2.40.50.580">
    <property type="match status" value="1"/>
</dbReference>
<dbReference type="Gene3D" id="3.40.1350.60">
    <property type="match status" value="1"/>
</dbReference>
<dbReference type="HAMAP" id="MF_00095">
    <property type="entry name" value="SfsA"/>
    <property type="match status" value="1"/>
</dbReference>
<dbReference type="InterPro" id="IPR005224">
    <property type="entry name" value="SfsA"/>
</dbReference>
<dbReference type="InterPro" id="IPR040452">
    <property type="entry name" value="SfsA_C"/>
</dbReference>
<dbReference type="InterPro" id="IPR041465">
    <property type="entry name" value="SfsA_N"/>
</dbReference>
<dbReference type="NCBIfam" id="TIGR00230">
    <property type="entry name" value="sfsA"/>
    <property type="match status" value="1"/>
</dbReference>
<dbReference type="PANTHER" id="PTHR30545">
    <property type="entry name" value="SUGAR FERMENTATION STIMULATION PROTEIN A"/>
    <property type="match status" value="1"/>
</dbReference>
<dbReference type="PANTHER" id="PTHR30545:SF2">
    <property type="entry name" value="SUGAR FERMENTATION STIMULATION PROTEIN A"/>
    <property type="match status" value="1"/>
</dbReference>
<dbReference type="Pfam" id="PF03749">
    <property type="entry name" value="SfsA"/>
    <property type="match status" value="1"/>
</dbReference>
<dbReference type="Pfam" id="PF17746">
    <property type="entry name" value="SfsA_N"/>
    <property type="match status" value="1"/>
</dbReference>
<keyword id="KW-0238">DNA-binding</keyword>
<comment type="function">
    <text evidence="1">Binds to DNA non-specifically. Could be a regulatory factor involved in maltose metabolism.</text>
</comment>
<comment type="similarity">
    <text evidence="1">Belongs to the SfsA family.</text>
</comment>